<gene>
    <name evidence="1" type="primary">trmD</name>
    <name type="ordered locus">PP_1464</name>
</gene>
<name>TRMD_PSEPK</name>
<feature type="chain" id="PRO_0000060435" description="tRNA (guanine-N(1)-)-methyltransferase">
    <location>
        <begin position="1"/>
        <end position="250"/>
    </location>
</feature>
<feature type="binding site" evidence="1">
    <location>
        <position position="116"/>
    </location>
    <ligand>
        <name>S-adenosyl-L-methionine</name>
        <dbReference type="ChEBI" id="CHEBI:59789"/>
    </ligand>
</feature>
<feature type="binding site" evidence="1">
    <location>
        <begin position="136"/>
        <end position="141"/>
    </location>
    <ligand>
        <name>S-adenosyl-L-methionine</name>
        <dbReference type="ChEBI" id="CHEBI:59789"/>
    </ligand>
</feature>
<comment type="function">
    <text evidence="1">Specifically methylates guanosine-37 in various tRNAs.</text>
</comment>
<comment type="catalytic activity">
    <reaction evidence="1">
        <text>guanosine(37) in tRNA + S-adenosyl-L-methionine = N(1)-methylguanosine(37) in tRNA + S-adenosyl-L-homocysteine + H(+)</text>
        <dbReference type="Rhea" id="RHEA:36899"/>
        <dbReference type="Rhea" id="RHEA-COMP:10145"/>
        <dbReference type="Rhea" id="RHEA-COMP:10147"/>
        <dbReference type="ChEBI" id="CHEBI:15378"/>
        <dbReference type="ChEBI" id="CHEBI:57856"/>
        <dbReference type="ChEBI" id="CHEBI:59789"/>
        <dbReference type="ChEBI" id="CHEBI:73542"/>
        <dbReference type="ChEBI" id="CHEBI:74269"/>
        <dbReference type="EC" id="2.1.1.228"/>
    </reaction>
</comment>
<comment type="subunit">
    <text evidence="1">Homodimer.</text>
</comment>
<comment type="subcellular location">
    <subcellularLocation>
        <location evidence="1">Cytoplasm</location>
    </subcellularLocation>
</comment>
<comment type="similarity">
    <text evidence="1">Belongs to the RNA methyltransferase TrmD family.</text>
</comment>
<sequence length="250" mass="27995">MGNLRVDVITLFPEMFSAITEYGITSRAVKQGLLQVTCWNPRDYTTDRHHTVDDRPFGGGPGMVMKIKPLEDALVSARQATGAAAKVIYLSPQGRKLTQQAVKGLAEQESLILIAGRYEGIDERFIEAHVDEEWSIGDYVLSGGELPAMVLIDAVTRLLPGALGHVDSAEEDSFTDGLLDCPHYTRPEVYADQRVPDVLLSGNHAHIRRWRMKQSLGRTFERRADLLESRSLSGEEKKLLEEYLRERDDS</sequence>
<proteinExistence type="inferred from homology"/>
<dbReference type="EC" id="2.1.1.228" evidence="1"/>
<dbReference type="EMBL" id="AE015451">
    <property type="protein sequence ID" value="AAN67086.1"/>
    <property type="molecule type" value="Genomic_DNA"/>
</dbReference>
<dbReference type="RefSeq" id="NP_743622.1">
    <property type="nucleotide sequence ID" value="NC_002947.4"/>
</dbReference>
<dbReference type="RefSeq" id="WP_003252146.1">
    <property type="nucleotide sequence ID" value="NZ_CP169744.1"/>
</dbReference>
<dbReference type="SMR" id="Q88MV4"/>
<dbReference type="STRING" id="160488.PP_1464"/>
<dbReference type="PaxDb" id="160488-PP_1464"/>
<dbReference type="GeneID" id="97166583"/>
<dbReference type="KEGG" id="ppu:PP_1464"/>
<dbReference type="PATRIC" id="fig|160488.4.peg.1554"/>
<dbReference type="eggNOG" id="COG0336">
    <property type="taxonomic scope" value="Bacteria"/>
</dbReference>
<dbReference type="HOGENOM" id="CLU_047363_0_2_6"/>
<dbReference type="OrthoDB" id="9807416at2"/>
<dbReference type="PhylomeDB" id="Q88MV4"/>
<dbReference type="BioCyc" id="PPUT160488:G1G01-1556-MONOMER"/>
<dbReference type="Proteomes" id="UP000000556">
    <property type="component" value="Chromosome"/>
</dbReference>
<dbReference type="GO" id="GO:0005829">
    <property type="term" value="C:cytosol"/>
    <property type="evidence" value="ECO:0007669"/>
    <property type="project" value="TreeGrafter"/>
</dbReference>
<dbReference type="GO" id="GO:0052906">
    <property type="term" value="F:tRNA (guanine(37)-N1)-methyltransferase activity"/>
    <property type="evidence" value="ECO:0007669"/>
    <property type="project" value="UniProtKB-UniRule"/>
</dbReference>
<dbReference type="GO" id="GO:0002939">
    <property type="term" value="P:tRNA N1-guanine methylation"/>
    <property type="evidence" value="ECO:0007669"/>
    <property type="project" value="TreeGrafter"/>
</dbReference>
<dbReference type="CDD" id="cd18080">
    <property type="entry name" value="TrmD-like"/>
    <property type="match status" value="1"/>
</dbReference>
<dbReference type="FunFam" id="1.10.1270.20:FF:000001">
    <property type="entry name" value="tRNA (guanine-N(1)-)-methyltransferase"/>
    <property type="match status" value="1"/>
</dbReference>
<dbReference type="FunFam" id="3.40.1280.10:FF:000001">
    <property type="entry name" value="tRNA (guanine-N(1)-)-methyltransferase"/>
    <property type="match status" value="1"/>
</dbReference>
<dbReference type="Gene3D" id="3.40.1280.10">
    <property type="match status" value="1"/>
</dbReference>
<dbReference type="Gene3D" id="1.10.1270.20">
    <property type="entry name" value="tRNA(m1g37)methyltransferase, domain 2"/>
    <property type="match status" value="1"/>
</dbReference>
<dbReference type="HAMAP" id="MF_00605">
    <property type="entry name" value="TrmD"/>
    <property type="match status" value="1"/>
</dbReference>
<dbReference type="InterPro" id="IPR029028">
    <property type="entry name" value="Alpha/beta_knot_MTases"/>
</dbReference>
<dbReference type="InterPro" id="IPR023148">
    <property type="entry name" value="tRNA_m1G_MeTrfase_C_sf"/>
</dbReference>
<dbReference type="InterPro" id="IPR002649">
    <property type="entry name" value="tRNA_m1G_MeTrfase_TrmD"/>
</dbReference>
<dbReference type="InterPro" id="IPR029026">
    <property type="entry name" value="tRNA_m1G_MTases_N"/>
</dbReference>
<dbReference type="InterPro" id="IPR016009">
    <property type="entry name" value="tRNA_MeTrfase_TRMD/TRM10"/>
</dbReference>
<dbReference type="NCBIfam" id="NF000648">
    <property type="entry name" value="PRK00026.1"/>
    <property type="match status" value="1"/>
</dbReference>
<dbReference type="NCBIfam" id="TIGR00088">
    <property type="entry name" value="trmD"/>
    <property type="match status" value="1"/>
</dbReference>
<dbReference type="PANTHER" id="PTHR46417">
    <property type="entry name" value="TRNA (GUANINE-N(1)-)-METHYLTRANSFERASE"/>
    <property type="match status" value="1"/>
</dbReference>
<dbReference type="PANTHER" id="PTHR46417:SF1">
    <property type="entry name" value="TRNA (GUANINE-N(1)-)-METHYLTRANSFERASE"/>
    <property type="match status" value="1"/>
</dbReference>
<dbReference type="Pfam" id="PF01746">
    <property type="entry name" value="tRNA_m1G_MT"/>
    <property type="match status" value="1"/>
</dbReference>
<dbReference type="PIRSF" id="PIRSF000386">
    <property type="entry name" value="tRNA_mtase"/>
    <property type="match status" value="1"/>
</dbReference>
<dbReference type="SUPFAM" id="SSF75217">
    <property type="entry name" value="alpha/beta knot"/>
    <property type="match status" value="1"/>
</dbReference>
<protein>
    <recommendedName>
        <fullName evidence="1">tRNA (guanine-N(1)-)-methyltransferase</fullName>
        <ecNumber evidence="1">2.1.1.228</ecNumber>
    </recommendedName>
    <alternativeName>
        <fullName evidence="1">M1G-methyltransferase</fullName>
    </alternativeName>
    <alternativeName>
        <fullName evidence="1">tRNA [GM37] methyltransferase</fullName>
    </alternativeName>
</protein>
<evidence type="ECO:0000255" key="1">
    <source>
        <dbReference type="HAMAP-Rule" id="MF_00605"/>
    </source>
</evidence>
<organism>
    <name type="scientific">Pseudomonas putida (strain ATCC 47054 / DSM 6125 / CFBP 8728 / NCIMB 11950 / KT2440)</name>
    <dbReference type="NCBI Taxonomy" id="160488"/>
    <lineage>
        <taxon>Bacteria</taxon>
        <taxon>Pseudomonadati</taxon>
        <taxon>Pseudomonadota</taxon>
        <taxon>Gammaproteobacteria</taxon>
        <taxon>Pseudomonadales</taxon>
        <taxon>Pseudomonadaceae</taxon>
        <taxon>Pseudomonas</taxon>
    </lineage>
</organism>
<accession>Q88MV4</accession>
<reference key="1">
    <citation type="journal article" date="2002" name="Environ. Microbiol.">
        <title>Complete genome sequence and comparative analysis of the metabolically versatile Pseudomonas putida KT2440.</title>
        <authorList>
            <person name="Nelson K.E."/>
            <person name="Weinel C."/>
            <person name="Paulsen I.T."/>
            <person name="Dodson R.J."/>
            <person name="Hilbert H."/>
            <person name="Martins dos Santos V.A.P."/>
            <person name="Fouts D.E."/>
            <person name="Gill S.R."/>
            <person name="Pop M."/>
            <person name="Holmes M."/>
            <person name="Brinkac L.M."/>
            <person name="Beanan M.J."/>
            <person name="DeBoy R.T."/>
            <person name="Daugherty S.C."/>
            <person name="Kolonay J.F."/>
            <person name="Madupu R."/>
            <person name="Nelson W.C."/>
            <person name="White O."/>
            <person name="Peterson J.D."/>
            <person name="Khouri H.M."/>
            <person name="Hance I."/>
            <person name="Chris Lee P."/>
            <person name="Holtzapple E.K."/>
            <person name="Scanlan D."/>
            <person name="Tran K."/>
            <person name="Moazzez A."/>
            <person name="Utterback T.R."/>
            <person name="Rizzo M."/>
            <person name="Lee K."/>
            <person name="Kosack D."/>
            <person name="Moestl D."/>
            <person name="Wedler H."/>
            <person name="Lauber J."/>
            <person name="Stjepandic D."/>
            <person name="Hoheisel J."/>
            <person name="Straetz M."/>
            <person name="Heim S."/>
            <person name="Kiewitz C."/>
            <person name="Eisen J.A."/>
            <person name="Timmis K.N."/>
            <person name="Duesterhoeft A."/>
            <person name="Tuemmler B."/>
            <person name="Fraser C.M."/>
        </authorList>
    </citation>
    <scope>NUCLEOTIDE SEQUENCE [LARGE SCALE GENOMIC DNA]</scope>
    <source>
        <strain>ATCC 47054 / DSM 6125 / CFBP 8728 / NCIMB 11950 / KT2440</strain>
    </source>
</reference>
<keyword id="KW-0963">Cytoplasm</keyword>
<keyword id="KW-0489">Methyltransferase</keyword>
<keyword id="KW-1185">Reference proteome</keyword>
<keyword id="KW-0949">S-adenosyl-L-methionine</keyword>
<keyword id="KW-0808">Transferase</keyword>
<keyword id="KW-0819">tRNA processing</keyword>